<reference key="1">
    <citation type="submission" date="2002-02" db="EMBL/GenBank/DDBJ databases">
        <title>PECs, a multigene family of proteases expressed in rodent placenta.</title>
        <authorList>
            <person name="Sol-Church K."/>
        </authorList>
    </citation>
    <scope>NUCLEOTIDE SEQUENCE [MRNA]</scope>
    <source>
        <tissue>Placenta</tissue>
    </source>
</reference>
<reference key="2">
    <citation type="journal article" date="2004" name="Genome Res.">
        <title>The status, quality, and expansion of the NIH full-length cDNA project: the Mammalian Gene Collection (MGC).</title>
        <authorList>
            <consortium name="The MGC Project Team"/>
        </authorList>
    </citation>
    <scope>NUCLEOTIDE SEQUENCE [LARGE SCALE MRNA]</scope>
    <source>
        <tissue>Placenta</tissue>
    </source>
</reference>
<reference key="3">
    <citation type="journal article" date="1995" name="Mol. Reprod. Dev.">
        <title>Cloning and expression of a rat placental cDNA encoding a novel cathepsin L-related protein.</title>
        <authorList>
            <person name="Conliffe P.R."/>
            <person name="Ogilvie S."/>
            <person name="Simmen R.C.M."/>
            <person name="Michel F.J."/>
            <person name="Saunders P."/>
            <person name="Shiverick K.T."/>
        </authorList>
    </citation>
    <scope>NUCLEOTIDE SEQUENCE [MRNA] OF 97-334</scope>
    <scope>DEVELOPMENTAL STAGE</scope>
    <scope>TISSUE SPECIFICITY</scope>
    <source>
        <strain>Sprague-Dawley</strain>
        <tissue>Placenta</tissue>
    </source>
</reference>
<name>CATJ_RAT</name>
<keyword id="KW-1015">Disulfide bond</keyword>
<keyword id="KW-0325">Glycoprotein</keyword>
<keyword id="KW-0378">Hydrolase</keyword>
<keyword id="KW-0458">Lysosome</keyword>
<keyword id="KW-0645">Protease</keyword>
<keyword id="KW-1185">Reference proteome</keyword>
<keyword id="KW-0732">Signal</keyword>
<keyword id="KW-0788">Thiol protease</keyword>
<keyword id="KW-0865">Zymogen</keyword>
<dbReference type="EC" id="3.4.22.-"/>
<dbReference type="EMBL" id="AF310623">
    <property type="protein sequence ID" value="AAL26793.2"/>
    <property type="molecule type" value="mRNA"/>
</dbReference>
<dbReference type="EMBL" id="BC097263">
    <property type="protein sequence ID" value="AAH97263.1"/>
    <property type="molecule type" value="mRNA"/>
</dbReference>
<dbReference type="EMBL" id="L14776">
    <property type="protein sequence ID" value="AAC42066.1"/>
    <property type="molecule type" value="mRNA"/>
</dbReference>
<dbReference type="PIR" id="I58002">
    <property type="entry name" value="I58002"/>
</dbReference>
<dbReference type="RefSeq" id="NP_058817.1">
    <property type="nucleotide sequence ID" value="NM_017121.2"/>
</dbReference>
<dbReference type="SMR" id="Q63088"/>
<dbReference type="FunCoup" id="Q63088">
    <property type="interactions" value="213"/>
</dbReference>
<dbReference type="ChEMBL" id="CHEMBL3308940"/>
<dbReference type="MEROPS" id="C01.038"/>
<dbReference type="GlyCosmos" id="Q63088">
    <property type="glycosylation" value="4 sites, No reported glycans"/>
</dbReference>
<dbReference type="GlyGen" id="Q63088">
    <property type="glycosylation" value="4 sites"/>
</dbReference>
<dbReference type="PaxDb" id="10116-ENSRNOP00000035908"/>
<dbReference type="Ensembl" id="ENSRNOT00000038758.5">
    <property type="protein sequence ID" value="ENSRNOP00000035908.3"/>
    <property type="gene ID" value="ENSRNOG00000046476.3"/>
</dbReference>
<dbReference type="GeneID" id="29174"/>
<dbReference type="KEGG" id="rno:29174"/>
<dbReference type="AGR" id="RGD:69241"/>
<dbReference type="CTD" id="26898"/>
<dbReference type="RGD" id="69241">
    <property type="gene designation" value="Ctsj"/>
</dbReference>
<dbReference type="eggNOG" id="KOG1543">
    <property type="taxonomic scope" value="Eukaryota"/>
</dbReference>
<dbReference type="GeneTree" id="ENSGT00940000153321"/>
<dbReference type="HOGENOM" id="CLU_012184_1_2_1"/>
<dbReference type="InParanoid" id="Q63088"/>
<dbReference type="OMA" id="CCACFFA"/>
<dbReference type="OrthoDB" id="10253408at2759"/>
<dbReference type="PhylomeDB" id="Q63088"/>
<dbReference type="PRO" id="PR:Q63088"/>
<dbReference type="Proteomes" id="UP000002494">
    <property type="component" value="Chromosome 17"/>
</dbReference>
<dbReference type="GO" id="GO:0005615">
    <property type="term" value="C:extracellular space"/>
    <property type="evidence" value="ECO:0000318"/>
    <property type="project" value="GO_Central"/>
</dbReference>
<dbReference type="GO" id="GO:0005764">
    <property type="term" value="C:lysosome"/>
    <property type="evidence" value="ECO:0000318"/>
    <property type="project" value="GO_Central"/>
</dbReference>
<dbReference type="GO" id="GO:0048471">
    <property type="term" value="C:perinuclear region of cytoplasm"/>
    <property type="evidence" value="ECO:0000314"/>
    <property type="project" value="RGD"/>
</dbReference>
<dbReference type="GO" id="GO:0004197">
    <property type="term" value="F:cysteine-type endopeptidase activity"/>
    <property type="evidence" value="ECO:0000318"/>
    <property type="project" value="GO_Central"/>
</dbReference>
<dbReference type="GO" id="GO:0051603">
    <property type="term" value="P:proteolysis involved in protein catabolic process"/>
    <property type="evidence" value="ECO:0000318"/>
    <property type="project" value="GO_Central"/>
</dbReference>
<dbReference type="CDD" id="cd02248">
    <property type="entry name" value="Peptidase_C1A"/>
    <property type="match status" value="1"/>
</dbReference>
<dbReference type="FunFam" id="3.90.70.10:FF:000006">
    <property type="entry name" value="Cathepsin S"/>
    <property type="match status" value="1"/>
</dbReference>
<dbReference type="Gene3D" id="3.90.70.10">
    <property type="entry name" value="Cysteine proteinases"/>
    <property type="match status" value="1"/>
</dbReference>
<dbReference type="InterPro" id="IPR038765">
    <property type="entry name" value="Papain-like_cys_pep_sf"/>
</dbReference>
<dbReference type="InterPro" id="IPR025661">
    <property type="entry name" value="Pept_asp_AS"/>
</dbReference>
<dbReference type="InterPro" id="IPR000169">
    <property type="entry name" value="Pept_cys_AS"/>
</dbReference>
<dbReference type="InterPro" id="IPR025660">
    <property type="entry name" value="Pept_his_AS"/>
</dbReference>
<dbReference type="InterPro" id="IPR013128">
    <property type="entry name" value="Peptidase_C1A"/>
</dbReference>
<dbReference type="InterPro" id="IPR000668">
    <property type="entry name" value="Peptidase_C1A_C"/>
</dbReference>
<dbReference type="InterPro" id="IPR039417">
    <property type="entry name" value="Peptidase_C1A_papain-like"/>
</dbReference>
<dbReference type="InterPro" id="IPR013201">
    <property type="entry name" value="Prot_inhib_I29"/>
</dbReference>
<dbReference type="PANTHER" id="PTHR12411">
    <property type="entry name" value="CYSTEINE PROTEASE FAMILY C1-RELATED"/>
    <property type="match status" value="1"/>
</dbReference>
<dbReference type="Pfam" id="PF08246">
    <property type="entry name" value="Inhibitor_I29"/>
    <property type="match status" value="1"/>
</dbReference>
<dbReference type="Pfam" id="PF00112">
    <property type="entry name" value="Peptidase_C1"/>
    <property type="match status" value="1"/>
</dbReference>
<dbReference type="PRINTS" id="PR00705">
    <property type="entry name" value="PAPAIN"/>
</dbReference>
<dbReference type="SMART" id="SM00848">
    <property type="entry name" value="Inhibitor_I29"/>
    <property type="match status" value="1"/>
</dbReference>
<dbReference type="SMART" id="SM00645">
    <property type="entry name" value="Pept_C1"/>
    <property type="match status" value="1"/>
</dbReference>
<dbReference type="SUPFAM" id="SSF54001">
    <property type="entry name" value="Cysteine proteinases"/>
    <property type="match status" value="1"/>
</dbReference>
<dbReference type="PROSITE" id="PS00640">
    <property type="entry name" value="THIOL_PROTEASE_ASN"/>
    <property type="match status" value="1"/>
</dbReference>
<dbReference type="PROSITE" id="PS00139">
    <property type="entry name" value="THIOL_PROTEASE_CYS"/>
    <property type="match status" value="1"/>
</dbReference>
<dbReference type="PROSITE" id="PS00639">
    <property type="entry name" value="THIOL_PROTEASE_HIS"/>
    <property type="match status" value="1"/>
</dbReference>
<accession>Q63088</accession>
<accession>Q920D9</accession>
<proteinExistence type="evidence at transcript level"/>
<feature type="signal peptide" evidence="2">
    <location>
        <begin position="1"/>
        <end position="17"/>
    </location>
</feature>
<feature type="propeptide" id="PRO_0000026232" description="Activation peptide" evidence="1">
    <location>
        <begin position="18"/>
        <end position="113"/>
    </location>
</feature>
<feature type="chain" id="PRO_0000026233" description="Cathepsin J">
    <location>
        <begin position="114"/>
        <end position="334"/>
    </location>
</feature>
<feature type="active site" evidence="1">
    <location>
        <position position="138"/>
    </location>
</feature>
<feature type="active site" evidence="1">
    <location>
        <position position="276"/>
    </location>
</feature>
<feature type="active site" evidence="1">
    <location>
        <position position="300"/>
    </location>
</feature>
<feature type="glycosylation site" description="N-linked (GlcNAc...) asparagine" evidence="2">
    <location>
        <position position="217"/>
    </location>
</feature>
<feature type="glycosylation site" description="N-linked (GlcNAc...) asparagine" evidence="2">
    <location>
        <position position="221"/>
    </location>
</feature>
<feature type="glycosylation site" description="N-linked (GlcNAc...) asparagine" evidence="2">
    <location>
        <position position="268"/>
    </location>
</feature>
<feature type="glycosylation site" description="N-linked (GlcNAc...) asparagine" evidence="2">
    <location>
        <position position="288"/>
    </location>
</feature>
<feature type="disulfide bond" evidence="1">
    <location>
        <begin position="269"/>
        <end position="322"/>
    </location>
</feature>
<feature type="sequence conflict" description="In Ref. 3; AAC42066." evidence="7" ref="3">
    <original>I</original>
    <variation>N</variation>
    <location>
        <position position="97"/>
    </location>
</feature>
<feature type="sequence conflict" description="In Ref. 3; AAC42066." evidence="7" ref="3">
    <original>FS</original>
    <variation>SL</variation>
    <location>
        <begin position="152"/>
        <end position="153"/>
    </location>
</feature>
<feature type="sequence conflict" description="In Ref. 3." evidence="7" ref="3">
    <original>CSKSEGNNGCR</original>
    <variation>TKSEGIGLP</variation>
    <location>
        <begin position="169"/>
        <end position="179"/>
    </location>
</feature>
<protein>
    <recommendedName>
        <fullName>Cathepsin J</fullName>
        <ecNumber>3.4.22.-</ecNumber>
    </recommendedName>
    <alternativeName>
        <fullName>Cathepsin L-related protein</fullName>
    </alternativeName>
    <alternativeName>
        <fullName>Cathepsin P</fullName>
    </alternativeName>
    <alternativeName>
        <fullName>Catlrp-p</fullName>
    </alternativeName>
</protein>
<comment type="subcellular location">
    <subcellularLocation>
        <location evidence="7">Lysosome</location>
    </subcellularLocation>
</comment>
<comment type="tissue specificity">
    <text evidence="6">Expressed specifically in placenta.</text>
</comment>
<comment type="developmental stage">
    <text evidence="6">Highest expression on 18 dpc.</text>
</comment>
<comment type="similarity">
    <text evidence="3 4 5">Belongs to the peptidase C1 family.</text>
</comment>
<sequence length="334" mass="36783">MTPAVFLVILCFGVASGAPARDPNLDAEWQDWKTKYAKSYSPVEEELKRAVWEENLKMIQLHNKENGLGKNGFTMEMNAFADTTGEEFRKSLSDILIPAAVTNPSAQKQVSIGLPNFKDWRKEGYVTPVRNQGKCGSCWAFAAVGAIEGQMFSKTGNLTPLSVQNLLDCSKSEGNNGCRWGTAHQAFNYVLKNKGLEAEATYPYEGKDGPCRYHSENASANITGFVNLPPNELYLWVAVASIGPVSAAIDASHDSFRFYSGGVYHEPNCSSYVVNHAVLVVGYGFEGNETDGNNYWLIKNSWGEEWGINGFMKIAKDRNNHCGIASQASFPDIF</sequence>
<gene>
    <name type="primary">Ctsj</name>
    <name type="synonym">Ctsp</name>
</gene>
<evidence type="ECO:0000250" key="1"/>
<evidence type="ECO:0000255" key="2"/>
<evidence type="ECO:0000255" key="3">
    <source>
        <dbReference type="PROSITE-ProRule" id="PRU10088"/>
    </source>
</evidence>
<evidence type="ECO:0000255" key="4">
    <source>
        <dbReference type="PROSITE-ProRule" id="PRU10089"/>
    </source>
</evidence>
<evidence type="ECO:0000255" key="5">
    <source>
        <dbReference type="PROSITE-ProRule" id="PRU10090"/>
    </source>
</evidence>
<evidence type="ECO:0000269" key="6">
    <source>
    </source>
</evidence>
<evidence type="ECO:0000305" key="7"/>
<organism>
    <name type="scientific">Rattus norvegicus</name>
    <name type="common">Rat</name>
    <dbReference type="NCBI Taxonomy" id="10116"/>
    <lineage>
        <taxon>Eukaryota</taxon>
        <taxon>Metazoa</taxon>
        <taxon>Chordata</taxon>
        <taxon>Craniata</taxon>
        <taxon>Vertebrata</taxon>
        <taxon>Euteleostomi</taxon>
        <taxon>Mammalia</taxon>
        <taxon>Eutheria</taxon>
        <taxon>Euarchontoglires</taxon>
        <taxon>Glires</taxon>
        <taxon>Rodentia</taxon>
        <taxon>Myomorpha</taxon>
        <taxon>Muroidea</taxon>
        <taxon>Muridae</taxon>
        <taxon>Murinae</taxon>
        <taxon>Rattus</taxon>
    </lineage>
</organism>